<evidence type="ECO:0000250" key="1">
    <source>
        <dbReference type="UniProtKB" id="Q84HF5"/>
    </source>
</evidence>
<evidence type="ECO:0000255" key="2">
    <source>
        <dbReference type="HAMAP-Rule" id="MF_03018"/>
    </source>
</evidence>
<evidence type="ECO:0000269" key="3">
    <source>
    </source>
</evidence>
<evidence type="ECO:0000269" key="4">
    <source>
    </source>
</evidence>
<evidence type="ECO:0000269" key="5">
    <source>
    </source>
</evidence>
<evidence type="ECO:0000269" key="6">
    <source>
    </source>
</evidence>
<evidence type="ECO:0000269" key="7">
    <source>
    </source>
</evidence>
<evidence type="ECO:0000269" key="8">
    <source>
    </source>
</evidence>
<evidence type="ECO:0000269" key="9">
    <source>
    </source>
</evidence>
<evidence type="ECO:0000269" key="10">
    <source>
    </source>
</evidence>
<evidence type="ECO:0000303" key="11">
    <source>
    </source>
</evidence>
<evidence type="ECO:0000305" key="12"/>
<evidence type="ECO:0000305" key="13">
    <source>
    </source>
</evidence>
<evidence type="ECO:0000312" key="14">
    <source>
        <dbReference type="EMBL" id="AAC62615.1"/>
    </source>
</evidence>
<evidence type="ECO:0000312" key="15">
    <source>
        <dbReference type="EMBL" id="CAA73613.1"/>
    </source>
</evidence>
<evidence type="ECO:0000312" key="16">
    <source>
        <dbReference type="HGNC" id="HGNC:6381"/>
    </source>
</evidence>
<evidence type="ECO:0007744" key="17">
    <source>
        <dbReference type="PDB" id="5X68"/>
    </source>
</evidence>
<evidence type="ECO:0007829" key="18">
    <source>
        <dbReference type="PDB" id="5X68"/>
    </source>
</evidence>
<comment type="function">
    <text evidence="5 6 7 8 9 13">Catalyzes the hydroxylation of L-kynurenine (L-Kyn) to form 3-hydroxy-L-kynurenine (L-3OHKyn) (PubMed:23575632, PubMed:26752518, PubMed:28604669, PubMed:29208702, PubMed:29429898). Required for synthesis of quinolinic acid, a neurotoxic NMDA receptor antagonist and potential endogenous inhibitor of NMDA receptor signaling in axonal targeting, synaptogenesis and apoptosis during brain development. Quinolinic acid may also affect NMDA receptor signaling in pancreatic beta cells, osteoblasts, myocardial cells, and the gastrointestinal tract (Probable).</text>
</comment>
<comment type="catalytic activity">
    <reaction evidence="2 3 9 10">
        <text>L-kynurenine + NADPH + O2 + H(+) = 3-hydroxy-L-kynurenine + NADP(+) + H2O</text>
        <dbReference type="Rhea" id="RHEA:20545"/>
        <dbReference type="ChEBI" id="CHEBI:15377"/>
        <dbReference type="ChEBI" id="CHEBI:15378"/>
        <dbReference type="ChEBI" id="CHEBI:15379"/>
        <dbReference type="ChEBI" id="CHEBI:57783"/>
        <dbReference type="ChEBI" id="CHEBI:57959"/>
        <dbReference type="ChEBI" id="CHEBI:58125"/>
        <dbReference type="ChEBI" id="CHEBI:58349"/>
        <dbReference type="EC" id="1.14.13.9"/>
    </reaction>
</comment>
<comment type="cofactor">
    <cofactor evidence="2 3 9">
        <name>FAD</name>
        <dbReference type="ChEBI" id="CHEBI:57692"/>
    </cofactor>
</comment>
<comment type="biophysicochemical properties">
    <kinetics>
        <KM evidence="3 5 10">24.1 uM for L-kynurenine</KM>
        <KM evidence="6">2 uM for L-kynurenine</KM>
        <KM evidence="6">78 uM for L-kynurenine</KM>
        <Vmax evidence="3 10">8.5 umol/min/mg enzyme</Vmax>
        <text evidence="7">kcat is 0.24 sec(-1) for L-kynurenine.</text>
    </kinetics>
    <phDependence>
        <text evidence="3 10">Optimum pH is 7.5.</text>
    </phDependence>
</comment>
<comment type="pathway">
    <text evidence="2">Cofactor biosynthesis; NAD(+) biosynthesis; quinolinate from L-kynurenine: step 1/3.</text>
</comment>
<comment type="interaction">
    <interactant intactId="EBI-21870540">
        <id>O15229-2</id>
    </interactant>
    <interactant intactId="EBI-466029">
        <id>P42858</id>
        <label>HTT</label>
    </interactant>
    <organismsDiffer>false</organismsDiffer>
    <experiments>3</experiments>
</comment>
<comment type="subcellular location">
    <subcellularLocation>
        <location evidence="2 10">Mitochondrion outer membrane</location>
        <topology evidence="2 10">Multi-pass membrane protein</topology>
    </subcellularLocation>
</comment>
<comment type="alternative products">
    <event type="alternative splicing"/>
    <isoform>
        <id>O15229-1</id>
        <name evidence="3 10">1</name>
        <sequence type="displayed"/>
    </isoform>
    <isoform>
        <id>O15229-2</id>
        <name evidence="4">2</name>
        <sequence type="described" ref="VSP_051973"/>
    </isoform>
    <isoform>
        <id>O15229-3</id>
        <name evidence="4">3</name>
        <sequence type="described" ref="VSP_051972"/>
    </isoform>
</comment>
<comment type="tissue specificity">
    <text evidence="10">Highest levels in placenta and liver. Detectable in kidney.</text>
</comment>
<comment type="domain">
    <text evidence="8 9">Transmembrane domains are required for enzymatic activity.</text>
</comment>
<comment type="miscellaneous">
    <text evidence="10">Increased in neuroinflammatory conditions. Inhibitors are investigated as potential neuroprotective drugs since they lead to an increased level of kynurenic acid, a neuroprotective NMDA receptor agonist.</text>
</comment>
<comment type="miscellaneous">
    <molecule>Isoform 3</molecule>
    <text evidence="12">Gene model based on mouse cDNA data.</text>
</comment>
<comment type="similarity">
    <text evidence="2">Belongs to the aromatic-ring hydroxylase family. KMO subfamily.</text>
</comment>
<protein>
    <recommendedName>
        <fullName evidence="2">Kynurenine 3-monooxygenase</fullName>
        <ecNumber evidence="2">1.14.13.9</ecNumber>
    </recommendedName>
    <alternativeName>
        <fullName evidence="2">Kynurenine 3-hydroxylase</fullName>
    </alternativeName>
</protein>
<dbReference type="EC" id="1.14.13.9" evidence="2"/>
<dbReference type="EMBL" id="Y13153">
    <property type="protein sequence ID" value="CAA73613.1"/>
    <property type="molecule type" value="mRNA"/>
</dbReference>
<dbReference type="EMBL" id="AF056032">
    <property type="protein sequence ID" value="AAC62615.1"/>
    <property type="molecule type" value="mRNA"/>
</dbReference>
<dbReference type="EMBL" id="AL133390">
    <property type="status" value="NOT_ANNOTATED_CDS"/>
    <property type="molecule type" value="Genomic_DNA"/>
</dbReference>
<dbReference type="EMBL" id="FO393423">
    <property type="status" value="NOT_ANNOTATED_CDS"/>
    <property type="molecule type" value="Genomic_DNA"/>
</dbReference>
<dbReference type="CCDS" id="CCDS1618.1">
    <molecule id="O15229-1"/>
</dbReference>
<dbReference type="CCDS" id="CCDS91182.1">
    <molecule id="O15229-2"/>
</dbReference>
<dbReference type="RefSeq" id="NP_001397873.1">
    <molecule id="O15229-2"/>
    <property type="nucleotide sequence ID" value="NM_001410944.1"/>
</dbReference>
<dbReference type="RefSeq" id="NP_003670.2">
    <molecule id="O15229-1"/>
    <property type="nucleotide sequence ID" value="NM_003679.5"/>
</dbReference>
<dbReference type="PDB" id="5X68">
    <property type="method" value="X-ray"/>
    <property type="resolution" value="2.10 A"/>
    <property type="chains" value="A/B=1-374"/>
</dbReference>
<dbReference type="PDBsum" id="5X68"/>
<dbReference type="SMR" id="O15229"/>
<dbReference type="BioGRID" id="114133">
    <property type="interactions" value="9"/>
</dbReference>
<dbReference type="FunCoup" id="O15229">
    <property type="interactions" value="529"/>
</dbReference>
<dbReference type="IntAct" id="O15229">
    <property type="interactions" value="7"/>
</dbReference>
<dbReference type="MINT" id="O15229"/>
<dbReference type="STRING" id="9606.ENSP00000355517"/>
<dbReference type="BindingDB" id="O15229"/>
<dbReference type="ChEMBL" id="CHEMBL2145"/>
<dbReference type="GuidetoPHARMACOLOGY" id="2886"/>
<dbReference type="GlyCosmos" id="O15229">
    <property type="glycosylation" value="1 site, No reported glycans"/>
</dbReference>
<dbReference type="GlyGen" id="O15229">
    <property type="glycosylation" value="1 site"/>
</dbReference>
<dbReference type="iPTMnet" id="O15229"/>
<dbReference type="PhosphoSitePlus" id="O15229"/>
<dbReference type="BioMuta" id="KMO"/>
<dbReference type="MassIVE" id="O15229"/>
<dbReference type="PaxDb" id="9606-ENSP00000355517"/>
<dbReference type="PeptideAtlas" id="O15229"/>
<dbReference type="ProteomicsDB" id="48519">
    <molecule id="O15229-1"/>
</dbReference>
<dbReference type="ProteomicsDB" id="48520">
    <molecule id="O15229-2"/>
</dbReference>
<dbReference type="ProteomicsDB" id="48521">
    <molecule id="O15229-3"/>
</dbReference>
<dbReference type="Antibodypedia" id="34702">
    <property type="antibodies" value="195 antibodies from 32 providers"/>
</dbReference>
<dbReference type="DNASU" id="8564"/>
<dbReference type="Ensembl" id="ENST00000366557.8">
    <molecule id="O15229-3"/>
    <property type="protein sequence ID" value="ENSP00000355515.4"/>
    <property type="gene ID" value="ENSG00000117009.12"/>
</dbReference>
<dbReference type="Ensembl" id="ENST00000366558.7">
    <molecule id="O15229-2"/>
    <property type="protein sequence ID" value="ENSP00000355516.3"/>
    <property type="gene ID" value="ENSG00000117009.12"/>
</dbReference>
<dbReference type="Ensembl" id="ENST00000366559.9">
    <molecule id="O15229-1"/>
    <property type="protein sequence ID" value="ENSP00000355517.4"/>
    <property type="gene ID" value="ENSG00000117009.12"/>
</dbReference>
<dbReference type="GeneID" id="8564"/>
<dbReference type="KEGG" id="hsa:8564"/>
<dbReference type="MANE-Select" id="ENST00000366559.9">
    <property type="protein sequence ID" value="ENSP00000355517.4"/>
    <property type="RefSeq nucleotide sequence ID" value="NM_003679.5"/>
    <property type="RefSeq protein sequence ID" value="NP_003670.2"/>
</dbReference>
<dbReference type="UCSC" id="uc001hyy.4">
    <molecule id="O15229-1"/>
    <property type="organism name" value="human"/>
</dbReference>
<dbReference type="AGR" id="HGNC:6381"/>
<dbReference type="CTD" id="8564"/>
<dbReference type="DisGeNET" id="8564"/>
<dbReference type="GeneCards" id="KMO"/>
<dbReference type="HGNC" id="HGNC:6381">
    <property type="gene designation" value="KMO"/>
</dbReference>
<dbReference type="HPA" id="ENSG00000117009">
    <property type="expression patterns" value="Group enriched (kidney, liver)"/>
</dbReference>
<dbReference type="MIM" id="603538">
    <property type="type" value="gene"/>
</dbReference>
<dbReference type="neXtProt" id="NX_O15229"/>
<dbReference type="OpenTargets" id="ENSG00000117009"/>
<dbReference type="PharmGKB" id="PA30172"/>
<dbReference type="VEuPathDB" id="HostDB:ENSG00000117009"/>
<dbReference type="eggNOG" id="KOG2614">
    <property type="taxonomic scope" value="Eukaryota"/>
</dbReference>
<dbReference type="GeneTree" id="ENSGT00390000000747"/>
<dbReference type="HOGENOM" id="CLU_023210_0_0_1"/>
<dbReference type="InParanoid" id="O15229"/>
<dbReference type="OMA" id="REFMFIA"/>
<dbReference type="OrthoDB" id="10053569at2759"/>
<dbReference type="PAN-GO" id="O15229">
    <property type="GO annotations" value="6 GO annotations based on evolutionary models"/>
</dbReference>
<dbReference type="PhylomeDB" id="O15229"/>
<dbReference type="TreeFam" id="TF312990"/>
<dbReference type="BioCyc" id="MetaCyc:HS04082-MONOMER"/>
<dbReference type="BRENDA" id="1.14.13.9">
    <property type="organism ID" value="2681"/>
</dbReference>
<dbReference type="PathwayCommons" id="O15229"/>
<dbReference type="Reactome" id="R-HSA-71240">
    <property type="pathway name" value="Tryptophan catabolism"/>
</dbReference>
<dbReference type="SABIO-RK" id="O15229"/>
<dbReference type="SignaLink" id="O15229"/>
<dbReference type="UniPathway" id="UPA00253">
    <property type="reaction ID" value="UER00328"/>
</dbReference>
<dbReference type="BioGRID-ORCS" id="8564">
    <property type="hits" value="11 hits in 1148 CRISPR screens"/>
</dbReference>
<dbReference type="ChiTaRS" id="KMO">
    <property type="organism name" value="human"/>
</dbReference>
<dbReference type="GeneWiki" id="KMO_(gene)"/>
<dbReference type="GenomeRNAi" id="8564"/>
<dbReference type="Pharos" id="O15229">
    <property type="development level" value="Tchem"/>
</dbReference>
<dbReference type="PRO" id="PR:O15229"/>
<dbReference type="Proteomes" id="UP000005640">
    <property type="component" value="Chromosome 1"/>
</dbReference>
<dbReference type="RNAct" id="O15229">
    <property type="molecule type" value="protein"/>
</dbReference>
<dbReference type="Bgee" id="ENSG00000117009">
    <property type="expression patterns" value="Expressed in right lobe of liver and 125 other cell types or tissues"/>
</dbReference>
<dbReference type="ExpressionAtlas" id="O15229">
    <property type="expression patterns" value="baseline and differential"/>
</dbReference>
<dbReference type="GO" id="GO:0005829">
    <property type="term" value="C:cytosol"/>
    <property type="evidence" value="ECO:0000304"/>
    <property type="project" value="Reactome"/>
</dbReference>
<dbReference type="GO" id="GO:0005615">
    <property type="term" value="C:extracellular space"/>
    <property type="evidence" value="ECO:0007669"/>
    <property type="project" value="Ensembl"/>
</dbReference>
<dbReference type="GO" id="GO:0005741">
    <property type="term" value="C:mitochondrial outer membrane"/>
    <property type="evidence" value="ECO:0000250"/>
    <property type="project" value="UniProtKB"/>
</dbReference>
<dbReference type="GO" id="GO:0005739">
    <property type="term" value="C:mitochondrion"/>
    <property type="evidence" value="ECO:0006056"/>
    <property type="project" value="FlyBase"/>
</dbReference>
<dbReference type="GO" id="GO:0071949">
    <property type="term" value="F:FAD binding"/>
    <property type="evidence" value="ECO:0000314"/>
    <property type="project" value="UniProtKB"/>
</dbReference>
<dbReference type="GO" id="GO:0050660">
    <property type="term" value="F:flavin adenine dinucleotide binding"/>
    <property type="evidence" value="ECO:0000314"/>
    <property type="project" value="UniProtKB"/>
</dbReference>
<dbReference type="GO" id="GO:0004502">
    <property type="term" value="F:kynurenine 3-monooxygenase activity"/>
    <property type="evidence" value="ECO:0000314"/>
    <property type="project" value="UniProtKB"/>
</dbReference>
<dbReference type="GO" id="GO:0016174">
    <property type="term" value="F:NAD(P)H oxidase H2O2-forming activity"/>
    <property type="evidence" value="ECO:0000314"/>
    <property type="project" value="UniProtKB"/>
</dbReference>
<dbReference type="GO" id="GO:0034354">
    <property type="term" value="P:'de novo' NAD biosynthetic process from L-tryptophan"/>
    <property type="evidence" value="ECO:0007669"/>
    <property type="project" value="UniProtKB-UniRule"/>
</dbReference>
<dbReference type="GO" id="GO:0043420">
    <property type="term" value="P:anthranilate metabolic process"/>
    <property type="evidence" value="ECO:0007669"/>
    <property type="project" value="UniProtKB-UniRule"/>
</dbReference>
<dbReference type="GO" id="GO:0071347">
    <property type="term" value="P:cellular response to interleukin-1"/>
    <property type="evidence" value="ECO:0007669"/>
    <property type="project" value="Ensembl"/>
</dbReference>
<dbReference type="GO" id="GO:0071222">
    <property type="term" value="P:cellular response to lipopolysaccharide"/>
    <property type="evidence" value="ECO:0007669"/>
    <property type="project" value="Ensembl"/>
</dbReference>
<dbReference type="GO" id="GO:0034276">
    <property type="term" value="P:kynurenic acid biosynthetic process"/>
    <property type="evidence" value="ECO:0007669"/>
    <property type="project" value="Ensembl"/>
</dbReference>
<dbReference type="GO" id="GO:0070189">
    <property type="term" value="P:kynurenine metabolic process"/>
    <property type="evidence" value="ECO:0000314"/>
    <property type="project" value="UniProtKB"/>
</dbReference>
<dbReference type="GO" id="GO:0097052">
    <property type="term" value="P:L-kynurenine metabolic process"/>
    <property type="evidence" value="ECO:0007669"/>
    <property type="project" value="Ensembl"/>
</dbReference>
<dbReference type="GO" id="GO:0006569">
    <property type="term" value="P:L-tryptophan catabolic process"/>
    <property type="evidence" value="ECO:0000304"/>
    <property type="project" value="Reactome"/>
</dbReference>
<dbReference type="GO" id="GO:0019674">
    <property type="term" value="P:NAD metabolic process"/>
    <property type="evidence" value="ECO:0000314"/>
    <property type="project" value="UniProtKB"/>
</dbReference>
<dbReference type="GO" id="GO:1903296">
    <property type="term" value="P:positive regulation of glutamate secretion, neurotransmission"/>
    <property type="evidence" value="ECO:0007669"/>
    <property type="project" value="Ensembl"/>
</dbReference>
<dbReference type="GO" id="GO:0019805">
    <property type="term" value="P:quinolinate biosynthetic process"/>
    <property type="evidence" value="ECO:0007669"/>
    <property type="project" value="UniProtKB-UniRule"/>
</dbReference>
<dbReference type="GO" id="GO:0009651">
    <property type="term" value="P:response to salt stress"/>
    <property type="evidence" value="ECO:0000314"/>
    <property type="project" value="UniProtKB"/>
</dbReference>
<dbReference type="FunFam" id="3.50.50.60:FF:000105">
    <property type="entry name" value="Kynurenine 3-monooxygenase"/>
    <property type="match status" value="1"/>
</dbReference>
<dbReference type="Gene3D" id="3.50.50.60">
    <property type="entry name" value="FAD/NAD(P)-binding domain"/>
    <property type="match status" value="1"/>
</dbReference>
<dbReference type="HAMAP" id="MF_01971">
    <property type="entry name" value="Kynurenine_monooxygenase"/>
    <property type="match status" value="1"/>
</dbReference>
<dbReference type="InterPro" id="IPR002938">
    <property type="entry name" value="FAD-bd"/>
</dbReference>
<dbReference type="InterPro" id="IPR036188">
    <property type="entry name" value="FAD/NAD-bd_sf"/>
</dbReference>
<dbReference type="InterPro" id="IPR027545">
    <property type="entry name" value="Kynurenine_monooxygenase"/>
</dbReference>
<dbReference type="PANTHER" id="PTHR46028">
    <property type="entry name" value="KYNURENINE 3-MONOOXYGENASE"/>
    <property type="match status" value="1"/>
</dbReference>
<dbReference type="PANTHER" id="PTHR46028:SF2">
    <property type="entry name" value="KYNURENINE 3-MONOOXYGENASE"/>
    <property type="match status" value="1"/>
</dbReference>
<dbReference type="Pfam" id="PF01494">
    <property type="entry name" value="FAD_binding_3"/>
    <property type="match status" value="1"/>
</dbReference>
<dbReference type="PRINTS" id="PR00420">
    <property type="entry name" value="RNGMNOXGNASE"/>
</dbReference>
<dbReference type="SUPFAM" id="SSF51905">
    <property type="entry name" value="FAD/NAD(P)-binding domain"/>
    <property type="match status" value="1"/>
</dbReference>
<accession>O15229</accession>
<accession>A2A2U8</accession>
<accession>A2A2U9</accession>
<accession>A2A2V0</accession>
<accession>Q5SY07</accession>
<accession>Q5SY08</accession>
<accession>Q5SY09</accession>
<gene>
    <name evidence="2 16" type="primary">KMO</name>
</gene>
<sequence>MDSSVIQRKKVAVIGGGLVGSLQACFLAKRNFQIDVYEAREDTRVATFTRGRSINLALSHRGRQALKAVGLEDQIVSQGIPMRARMIHSLSGKKSAIPYGTKSQYILSVSRENLNKDLLTAAEKYPNVKMHFNHRLLKCNPEEGMITVLGSDKVPKDVTCDLIVGCDGAYSTVRSHLMKKPRFDYSQQYIPHGYMELTIPPKNGDYAMEPNYLHIWPRNTFMMIALPNMNKSFTCTLFMPFEEFEKLLTSNDVVDFFQKYFPDAIPLIGEKLLVQDFFLLPAQPMISVKCSSFHFKSHCVLLGDAAHAIVPFFGQGMNAGFEDCLVFDELMDKFSNDLSLCLPVFSRLRIPDDHAISDLSMYNYIEMRAHVNSSWFIFQKNMERFLHAIMPSTFIPLYTMVTFSRIRYHEAVQRWHWQKKVINKGLFFLGSLIAISSTYLLIHYMSPRSFLRLRRPWNWIAHFRNTTCFPAKAVDSLEQISNLISR</sequence>
<feature type="chain" id="PRO_0000229742" description="Kynurenine 3-monooxygenase" evidence="12">
    <location>
        <begin position="1"/>
        <end position="486"/>
    </location>
</feature>
<feature type="transmembrane region" description="Helical" evidence="2">
    <location>
        <begin position="385"/>
        <end position="404"/>
    </location>
</feature>
<feature type="transmembrane region" description="Helical" evidence="2">
    <location>
        <begin position="425"/>
        <end position="445"/>
    </location>
</feature>
<feature type="binding site" evidence="9 17">
    <location>
        <position position="19"/>
    </location>
    <ligand>
        <name>FAD</name>
        <dbReference type="ChEBI" id="CHEBI:57692"/>
    </ligand>
</feature>
<feature type="binding site" evidence="9 17">
    <location>
        <begin position="37"/>
        <end position="40"/>
    </location>
    <ligand>
        <name>FAD</name>
        <dbReference type="ChEBI" id="CHEBI:57692"/>
    </ligand>
</feature>
<feature type="binding site" evidence="9 17">
    <location>
        <position position="57"/>
    </location>
    <ligand>
        <name>FAD</name>
        <dbReference type="ChEBI" id="CHEBI:57692"/>
    </ligand>
</feature>
<feature type="binding site" evidence="1">
    <location>
        <position position="85"/>
    </location>
    <ligand>
        <name>L-kynurenine</name>
        <dbReference type="ChEBI" id="CHEBI:57959"/>
    </ligand>
</feature>
<feature type="binding site" evidence="1">
    <location>
        <position position="99"/>
    </location>
    <ligand>
        <name>L-kynurenine</name>
        <dbReference type="ChEBI" id="CHEBI:57959"/>
    </ligand>
</feature>
<feature type="binding site" evidence="9 17">
    <location>
        <position position="111"/>
    </location>
    <ligand>
        <name>FAD</name>
        <dbReference type="ChEBI" id="CHEBI:57692"/>
    </ligand>
</feature>
<feature type="binding site" evidence="9 17">
    <location>
        <position position="136"/>
    </location>
    <ligand>
        <name>FAD</name>
        <dbReference type="ChEBI" id="CHEBI:57692"/>
    </ligand>
</feature>
<feature type="binding site" evidence="9 17">
    <location>
        <position position="172"/>
    </location>
    <ligand>
        <name>FAD</name>
        <dbReference type="ChEBI" id="CHEBI:57692"/>
    </ligand>
</feature>
<feature type="binding site" evidence="9 17">
    <location>
        <position position="304"/>
    </location>
    <ligand>
        <name>FAD</name>
        <dbReference type="ChEBI" id="CHEBI:57692"/>
    </ligand>
</feature>
<feature type="binding site" evidence="9 17">
    <location>
        <begin position="317"/>
        <end position="318"/>
    </location>
    <ligand>
        <name>FAD</name>
        <dbReference type="ChEBI" id="CHEBI:57692"/>
    </ligand>
</feature>
<feature type="binding site" evidence="1">
    <location>
        <position position="363"/>
    </location>
    <ligand>
        <name>L-kynurenine</name>
        <dbReference type="ChEBI" id="CHEBI:57959"/>
    </ligand>
</feature>
<feature type="binding site" evidence="1">
    <location>
        <position position="398"/>
    </location>
    <ligand>
        <name>L-kynurenine</name>
        <dbReference type="ChEBI" id="CHEBI:57959"/>
    </ligand>
</feature>
<feature type="glycosylation site" description="N-linked (GlcNAc...) asparagine" evidence="9">
    <location>
        <position position="465"/>
    </location>
</feature>
<feature type="splice variant" id="VSP_051972" description="In isoform 3." evidence="11">
    <location>
        <begin position="367"/>
        <end position="400"/>
    </location>
</feature>
<feature type="splice variant" id="VSP_051973" description="In isoform 2." evidence="11">
    <location>
        <begin position="367"/>
        <end position="379"/>
    </location>
</feature>
<feature type="sequence variant" id="VAR_030845" description="In dbSNP:rs1053230." evidence="3 10">
    <original>R</original>
    <variation>C</variation>
    <location>
        <position position="452"/>
    </location>
</feature>
<feature type="mutagenesis site" description="Abolishes kynurenine 3-monooxygenase activity." evidence="8">
    <original>R</original>
    <variation>A</variation>
    <variation>K</variation>
    <location>
        <position position="85"/>
    </location>
</feature>
<feature type="mutagenesis site" description="Abolishes kynurenine 3-monooxygenase activity." evidence="8">
    <original>Y</original>
    <variation>A</variation>
    <location>
        <position position="99"/>
    </location>
</feature>
<feature type="mutagenesis site" description="Strongly decreases kynurenine 3-monooxygenase activity." evidence="8">
    <original>Y</original>
    <variation>F</variation>
    <location>
        <position position="99"/>
    </location>
</feature>
<feature type="mutagenesis site" description="Abolishes NADPH oxidase activity." evidence="9">
    <original>FF</original>
    <variation>AA</variation>
    <location>
        <begin position="312"/>
        <end position="313"/>
    </location>
</feature>
<feature type="mutagenesis site" description="Decreases to 30% NADPH oxidase activity." evidence="9">
    <original>F</original>
    <variation>A</variation>
    <location>
        <position position="312"/>
    </location>
</feature>
<feature type="mutagenesis site" description="Decreases to 50% NADPH oxidase activity." evidence="9">
    <original>F</original>
    <variation>A</variation>
    <location>
        <position position="313"/>
    </location>
</feature>
<feature type="mutagenesis site" description="Strongly decreases kynurenine 3-monooxygenase activity." evidence="8">
    <original>N</original>
    <variation>A</variation>
    <location>
        <position position="363"/>
    </location>
</feature>
<feature type="mutagenesis site" description="Abolishes kynurenine 3-monooxygenase activity." evidence="8">
    <original>N</original>
    <variation>D</variation>
    <location>
        <position position="363"/>
    </location>
</feature>
<feature type="mutagenesis site" description="Strongly decreases kynurenine 3-monooxygenase activity." evidence="8">
    <original>E</original>
    <variation>A</variation>
    <variation>Q</variation>
    <location>
        <position position="366"/>
    </location>
</feature>
<feature type="mutagenesis site" description="Strongly decreases kynurenine 3-monooxygenase activity." evidence="8">
    <original>M</original>
    <variation>A</variation>
    <location>
        <position position="367"/>
    </location>
</feature>
<feature type="mutagenesis site" description="Strongly decreases kynurenine 3-monooxygenase activity." evidence="8">
    <original>M</original>
    <variation>L</variation>
    <location>
        <position position="367"/>
    </location>
</feature>
<feature type="mutagenesis site" description="Abolishes kynurenine 3-monooxygenase activity." evidence="8">
    <original>Y</original>
    <variation>A</variation>
    <variation>F</variation>
    <location>
        <position position="398"/>
    </location>
</feature>
<feature type="mutagenesis site" description="Not glycosylated. Reduces to 80% kynurenine 3-monooxygenase activity." evidence="8">
    <original>N</original>
    <variation>A</variation>
    <location>
        <position position="465"/>
    </location>
</feature>
<feature type="strand" evidence="18">
    <location>
        <begin position="10"/>
        <end position="14"/>
    </location>
</feature>
<feature type="helix" evidence="18">
    <location>
        <begin position="18"/>
        <end position="28"/>
    </location>
</feature>
<feature type="turn" evidence="18">
    <location>
        <begin position="29"/>
        <end position="31"/>
    </location>
</feature>
<feature type="strand" evidence="18">
    <location>
        <begin position="33"/>
        <end position="37"/>
    </location>
</feature>
<feature type="turn" evidence="18">
    <location>
        <begin position="43"/>
        <end position="45"/>
    </location>
</feature>
<feature type="strand" evidence="18">
    <location>
        <begin position="55"/>
        <end position="58"/>
    </location>
</feature>
<feature type="helix" evidence="18">
    <location>
        <begin position="60"/>
        <end position="68"/>
    </location>
</feature>
<feature type="helix" evidence="18">
    <location>
        <begin position="72"/>
        <end position="76"/>
    </location>
</feature>
<feature type="strand" evidence="18">
    <location>
        <begin position="80"/>
        <end position="82"/>
    </location>
</feature>
<feature type="strand" evidence="18">
    <location>
        <begin position="84"/>
        <end position="88"/>
    </location>
</feature>
<feature type="strand" evidence="18">
    <location>
        <begin position="94"/>
        <end position="98"/>
    </location>
</feature>
<feature type="helix" evidence="18">
    <location>
        <begin position="102"/>
        <end position="104"/>
    </location>
</feature>
<feature type="strand" evidence="18">
    <location>
        <begin position="106"/>
        <end position="110"/>
    </location>
</feature>
<feature type="helix" evidence="18">
    <location>
        <begin position="111"/>
        <end position="123"/>
    </location>
</feature>
<feature type="strand" evidence="18">
    <location>
        <begin position="128"/>
        <end position="131"/>
    </location>
</feature>
<feature type="strand" evidence="18">
    <location>
        <begin position="138"/>
        <end position="140"/>
    </location>
</feature>
<feature type="turn" evidence="18">
    <location>
        <begin position="141"/>
        <end position="144"/>
    </location>
</feature>
<feature type="strand" evidence="18">
    <location>
        <begin position="145"/>
        <end position="148"/>
    </location>
</feature>
<feature type="strand" evidence="18">
    <location>
        <begin position="156"/>
        <end position="159"/>
    </location>
</feature>
<feature type="strand" evidence="18">
    <location>
        <begin position="161"/>
        <end position="165"/>
    </location>
</feature>
<feature type="helix" evidence="18">
    <location>
        <begin position="172"/>
        <end position="177"/>
    </location>
</feature>
<feature type="strand" evidence="18">
    <location>
        <begin position="189"/>
        <end position="199"/>
    </location>
</feature>
<feature type="strand" evidence="18">
    <location>
        <begin position="202"/>
        <end position="205"/>
    </location>
</feature>
<feature type="strand" evidence="18">
    <location>
        <begin position="212"/>
        <end position="217"/>
    </location>
</feature>
<feature type="strand" evidence="18">
    <location>
        <begin position="222"/>
        <end position="227"/>
    </location>
</feature>
<feature type="strand" evidence="18">
    <location>
        <begin position="233"/>
        <end position="240"/>
    </location>
</feature>
<feature type="helix" evidence="18">
    <location>
        <begin position="241"/>
        <end position="244"/>
    </location>
</feature>
<feature type="helix" evidence="18">
    <location>
        <begin position="250"/>
        <end position="260"/>
    </location>
</feature>
<feature type="helix" evidence="18">
    <location>
        <begin position="264"/>
        <end position="268"/>
    </location>
</feature>
<feature type="helix" evidence="18">
    <location>
        <begin position="270"/>
        <end position="277"/>
    </location>
</feature>
<feature type="strand" evidence="18">
    <location>
        <begin position="283"/>
        <end position="286"/>
    </location>
</feature>
<feature type="strand" evidence="18">
    <location>
        <begin position="288"/>
        <end position="290"/>
    </location>
</feature>
<feature type="strand" evidence="18">
    <location>
        <begin position="293"/>
        <end position="295"/>
    </location>
</feature>
<feature type="turn" evidence="18">
    <location>
        <begin position="296"/>
        <end position="298"/>
    </location>
</feature>
<feature type="strand" evidence="18">
    <location>
        <begin position="299"/>
        <end position="301"/>
    </location>
</feature>
<feature type="helix" evidence="18">
    <location>
        <begin position="303"/>
        <end position="305"/>
    </location>
</feature>
<feature type="turn" evidence="18">
    <location>
        <begin position="311"/>
        <end position="313"/>
    </location>
</feature>
<feature type="helix" evidence="18">
    <location>
        <begin position="316"/>
        <end position="333"/>
    </location>
</feature>
<feature type="turn" evidence="18">
    <location>
        <begin position="334"/>
        <end position="336"/>
    </location>
</feature>
<feature type="helix" evidence="18">
    <location>
        <begin position="338"/>
        <end position="349"/>
    </location>
</feature>
<feature type="strand" evidence="18">
    <location>
        <begin position="363"/>
        <end position="365"/>
    </location>
</feature>
<keyword id="KW-0002">3D-structure</keyword>
<keyword id="KW-0025">Alternative splicing</keyword>
<keyword id="KW-0274">FAD</keyword>
<keyword id="KW-0285">Flavoprotein</keyword>
<keyword id="KW-0325">Glycoprotein</keyword>
<keyword id="KW-0472">Membrane</keyword>
<keyword id="KW-0496">Mitochondrion</keyword>
<keyword id="KW-1000">Mitochondrion outer membrane</keyword>
<keyword id="KW-0503">Monooxygenase</keyword>
<keyword id="KW-0521">NADP</keyword>
<keyword id="KW-0560">Oxidoreductase</keyword>
<keyword id="KW-1267">Proteomics identification</keyword>
<keyword id="KW-0662">Pyridine nucleotide biosynthesis</keyword>
<keyword id="KW-1185">Reference proteome</keyword>
<keyword id="KW-0812">Transmembrane</keyword>
<keyword id="KW-1133">Transmembrane helix</keyword>
<organism>
    <name type="scientific">Homo sapiens</name>
    <name type="common">Human</name>
    <dbReference type="NCBI Taxonomy" id="9606"/>
    <lineage>
        <taxon>Eukaryota</taxon>
        <taxon>Metazoa</taxon>
        <taxon>Chordata</taxon>
        <taxon>Craniata</taxon>
        <taxon>Vertebrata</taxon>
        <taxon>Euteleostomi</taxon>
        <taxon>Mammalia</taxon>
        <taxon>Eutheria</taxon>
        <taxon>Euarchontoglires</taxon>
        <taxon>Primates</taxon>
        <taxon>Haplorrhini</taxon>
        <taxon>Catarrhini</taxon>
        <taxon>Hominidae</taxon>
        <taxon>Homo</taxon>
    </lineage>
</organism>
<name>KMO_HUMAN</name>
<reference evidence="12 15" key="1">
    <citation type="journal article" date="1997" name="FEBS Lett.">
        <title>Cloning and functional expression of human kynurenine 3-monooxygenase.</title>
        <authorList>
            <person name="Alberati-Giani D."/>
            <person name="Cesura A.M."/>
            <person name="Broger C."/>
            <person name="Warren W.D."/>
            <person name="Rover S."/>
            <person name="Malherbe P."/>
        </authorList>
    </citation>
    <scope>NUCLEOTIDE SEQUENCE [MRNA] (ISOFORM 1)</scope>
    <scope>CATALYTIC ACTIVITY</scope>
    <scope>BIOPHYSICOCHEMICAL PROPERTIES</scope>
    <scope>SUBCELLULAR LOCATION</scope>
    <scope>TISSUE SPECIFICITY</scope>
    <scope>VARIANT CYS-452</scope>
    <source>
        <tissue evidence="15">Liver</tissue>
    </source>
</reference>
<reference evidence="12 14" key="2">
    <citation type="journal article" date="2000" name="Eur. J. Biochem.">
        <title>Functional characterization and mechanism of action of recombinant human kynurenine 3-hydroxylase.</title>
        <authorList>
            <person name="Breton J."/>
            <person name="Avanzi N."/>
            <person name="Magagnin S."/>
            <person name="Covini N."/>
            <person name="Magistrelli G."/>
            <person name="Cozzi L."/>
            <person name="Isacchi A."/>
        </authorList>
    </citation>
    <scope>NUCLEOTIDE SEQUENCE [MRNA] (ISOFORM 1)</scope>
    <scope>CATALYTIC ACTIVITY</scope>
    <scope>COFACTOR</scope>
    <scope>BIOPHYSICOCHEMICAL PROPERTIES</scope>
    <scope>VARIANT CYS-452</scope>
    <source>
        <tissue evidence="3">Liver</tissue>
    </source>
</reference>
<reference evidence="12" key="3">
    <citation type="journal article" date="2006" name="Nature">
        <title>The DNA sequence and biological annotation of human chromosome 1.</title>
        <authorList>
            <person name="Gregory S.G."/>
            <person name="Barlow K.F."/>
            <person name="McLay K.E."/>
            <person name="Kaul R."/>
            <person name="Swarbreck D."/>
            <person name="Dunham A."/>
            <person name="Scott C.E."/>
            <person name="Howe K.L."/>
            <person name="Woodfine K."/>
            <person name="Spencer C.C.A."/>
            <person name="Jones M.C."/>
            <person name="Gillson C."/>
            <person name="Searle S."/>
            <person name="Zhou Y."/>
            <person name="Kokocinski F."/>
            <person name="McDonald L."/>
            <person name="Evans R."/>
            <person name="Phillips K."/>
            <person name="Atkinson A."/>
            <person name="Cooper R."/>
            <person name="Jones C."/>
            <person name="Hall R.E."/>
            <person name="Andrews T.D."/>
            <person name="Lloyd C."/>
            <person name="Ainscough R."/>
            <person name="Almeida J.P."/>
            <person name="Ambrose K.D."/>
            <person name="Anderson F."/>
            <person name="Andrew R.W."/>
            <person name="Ashwell R.I.S."/>
            <person name="Aubin K."/>
            <person name="Babbage A.K."/>
            <person name="Bagguley C.L."/>
            <person name="Bailey J."/>
            <person name="Beasley H."/>
            <person name="Bethel G."/>
            <person name="Bird C.P."/>
            <person name="Bray-Allen S."/>
            <person name="Brown J.Y."/>
            <person name="Brown A.J."/>
            <person name="Buckley D."/>
            <person name="Burton J."/>
            <person name="Bye J."/>
            <person name="Carder C."/>
            <person name="Chapman J.C."/>
            <person name="Clark S.Y."/>
            <person name="Clarke G."/>
            <person name="Clee C."/>
            <person name="Cobley V."/>
            <person name="Collier R.E."/>
            <person name="Corby N."/>
            <person name="Coville G.J."/>
            <person name="Davies J."/>
            <person name="Deadman R."/>
            <person name="Dunn M."/>
            <person name="Earthrowl M."/>
            <person name="Ellington A.G."/>
            <person name="Errington H."/>
            <person name="Frankish A."/>
            <person name="Frankland J."/>
            <person name="French L."/>
            <person name="Garner P."/>
            <person name="Garnett J."/>
            <person name="Gay L."/>
            <person name="Ghori M.R.J."/>
            <person name="Gibson R."/>
            <person name="Gilby L.M."/>
            <person name="Gillett W."/>
            <person name="Glithero R.J."/>
            <person name="Grafham D.V."/>
            <person name="Griffiths C."/>
            <person name="Griffiths-Jones S."/>
            <person name="Grocock R."/>
            <person name="Hammond S."/>
            <person name="Harrison E.S.I."/>
            <person name="Hart E."/>
            <person name="Haugen E."/>
            <person name="Heath P.D."/>
            <person name="Holmes S."/>
            <person name="Holt K."/>
            <person name="Howden P.J."/>
            <person name="Hunt A.R."/>
            <person name="Hunt S.E."/>
            <person name="Hunter G."/>
            <person name="Isherwood J."/>
            <person name="James R."/>
            <person name="Johnson C."/>
            <person name="Johnson D."/>
            <person name="Joy A."/>
            <person name="Kay M."/>
            <person name="Kershaw J.K."/>
            <person name="Kibukawa M."/>
            <person name="Kimberley A.M."/>
            <person name="King A."/>
            <person name="Knights A.J."/>
            <person name="Lad H."/>
            <person name="Laird G."/>
            <person name="Lawlor S."/>
            <person name="Leongamornlert D.A."/>
            <person name="Lloyd D.M."/>
            <person name="Loveland J."/>
            <person name="Lovell J."/>
            <person name="Lush M.J."/>
            <person name="Lyne R."/>
            <person name="Martin S."/>
            <person name="Mashreghi-Mohammadi M."/>
            <person name="Matthews L."/>
            <person name="Matthews N.S.W."/>
            <person name="McLaren S."/>
            <person name="Milne S."/>
            <person name="Mistry S."/>
            <person name="Moore M.J.F."/>
            <person name="Nickerson T."/>
            <person name="O'Dell C.N."/>
            <person name="Oliver K."/>
            <person name="Palmeiri A."/>
            <person name="Palmer S.A."/>
            <person name="Parker A."/>
            <person name="Patel D."/>
            <person name="Pearce A.V."/>
            <person name="Peck A.I."/>
            <person name="Pelan S."/>
            <person name="Phelps K."/>
            <person name="Phillimore B.J."/>
            <person name="Plumb R."/>
            <person name="Rajan J."/>
            <person name="Raymond C."/>
            <person name="Rouse G."/>
            <person name="Saenphimmachak C."/>
            <person name="Sehra H.K."/>
            <person name="Sheridan E."/>
            <person name="Shownkeen R."/>
            <person name="Sims S."/>
            <person name="Skuce C.D."/>
            <person name="Smith M."/>
            <person name="Steward C."/>
            <person name="Subramanian S."/>
            <person name="Sycamore N."/>
            <person name="Tracey A."/>
            <person name="Tromans A."/>
            <person name="Van Helmond Z."/>
            <person name="Wall M."/>
            <person name="Wallis J.M."/>
            <person name="White S."/>
            <person name="Whitehead S.L."/>
            <person name="Wilkinson J.E."/>
            <person name="Willey D.L."/>
            <person name="Williams H."/>
            <person name="Wilming L."/>
            <person name="Wray P.W."/>
            <person name="Wu Z."/>
            <person name="Coulson A."/>
            <person name="Vaudin M."/>
            <person name="Sulston J.E."/>
            <person name="Durbin R.M."/>
            <person name="Hubbard T."/>
            <person name="Wooster R."/>
            <person name="Dunham I."/>
            <person name="Carter N.P."/>
            <person name="McVean G."/>
            <person name="Ross M.T."/>
            <person name="Harrow J."/>
            <person name="Olson M.V."/>
            <person name="Beck S."/>
            <person name="Rogers J."/>
            <person name="Bentley D.R."/>
        </authorList>
    </citation>
    <scope>NUCLEOTIDE SEQUENCE [LARGE SCALE GENOMIC DNA]</scope>
</reference>
<reference evidence="12" key="4">
    <citation type="journal article" date="2002" name="Nat. Rev. Drug Discov.">
        <title>Endogenous kynurenines as targets for drug discovery and development.</title>
        <authorList>
            <person name="Stone T.W."/>
            <person name="Darlington L.G."/>
        </authorList>
    </citation>
    <scope>REVIEW</scope>
</reference>
<reference key="5">
    <citation type="journal article" date="2013" name="Nature">
        <title>Structural basis of kynurenine 3-monooxygenase inhibition.</title>
        <authorList>
            <person name="Amaral M."/>
            <person name="Levy C."/>
            <person name="Heyes D.J."/>
            <person name="Lafite P."/>
            <person name="Outeiro T.F."/>
            <person name="Giorgini F."/>
            <person name="Leys D."/>
            <person name="Scrutton N.S."/>
        </authorList>
    </citation>
    <scope>FUNCTION</scope>
    <scope>BIOPHYSICOCHEMICAL PROPERTIES</scope>
</reference>
<reference key="6">
    <citation type="journal article" date="2016" name="Nat. Med.">
        <title>Kynurenine-3-monooxygenase inhibition prevents multiple organ failure in rodent models of acute pancreatitis.</title>
        <authorList>
            <person name="Mole D.J."/>
            <person name="Webster S.P."/>
            <person name="Uings I."/>
            <person name="Zheng X."/>
            <person name="Binnie M."/>
            <person name="Wilson K."/>
            <person name="Hutchinson J.P."/>
            <person name="Mirguet O."/>
            <person name="Walker A."/>
            <person name="Beaufils B."/>
            <person name="Ancellin N."/>
            <person name="Trottet L."/>
            <person name="Beneton V."/>
            <person name="Mowat C.G."/>
            <person name="Wilkinson M."/>
            <person name="Rowland P."/>
            <person name="Haslam C."/>
            <person name="McBride A."/>
            <person name="Homer N.Z."/>
            <person name="Baily J.E."/>
            <person name="Sharp M.G."/>
            <person name="Garden O.J."/>
            <person name="Hughes J."/>
            <person name="Howie S.E."/>
            <person name="Holmes D.S."/>
            <person name="Liddle J."/>
            <person name="Iredale J.P."/>
        </authorList>
    </citation>
    <scope>FUNCTION</scope>
    <scope>BIOPHYSICOCHEMICAL PROPERTIES</scope>
</reference>
<reference key="7">
    <citation type="journal article" date="2017" name="Nat. Commun.">
        <title>Structural and mechanistic basis of differentiated inhibitors of the acute pancreatitis target kynurenine-3-monooxygenase.</title>
        <authorList>
            <person name="Hutchinson J.P."/>
            <person name="Rowland P."/>
            <person name="Taylor M.R.D."/>
            <person name="Christodoulou E.M."/>
            <person name="Haslam C."/>
            <person name="Hobbs C.I."/>
            <person name="Holmes D.S."/>
            <person name="Homes P."/>
            <person name="Liddle J."/>
            <person name="Mole D.J."/>
            <person name="Uings I."/>
            <person name="Walker A.L."/>
            <person name="Webster S.P."/>
            <person name="Mowat C.G."/>
            <person name="Chung C.W."/>
        </authorList>
    </citation>
    <scope>BIOPHYSICOCHEMICAL PROPERTIES</scope>
    <scope>FUNCTION</scope>
</reference>
<reference key="8">
    <citation type="journal article" date="2018" name="FASEB J.">
        <title>Biochemistry and structural studies of kynurenine 3-monooxygenase reveal allosteric inhibition by Ro 61-8048.</title>
        <authorList>
            <person name="Gao J."/>
            <person name="Yao L."/>
            <person name="Xia T."/>
            <person name="Liao X."/>
            <person name="Zhu D."/>
            <person name="Xiang Y."/>
        </authorList>
    </citation>
    <scope>FUNCTION</scope>
    <scope>DOMAIN</scope>
    <scope>GLYCOSYLATION AT ASN-465</scope>
    <scope>MUTAGENESIS OF ARG-85; TYR-99; ASN-363; GLU-366; MET-367; TYR-398 AND ASN-465</scope>
</reference>
<reference evidence="17" key="9">
    <citation type="journal article" date="2018" name="Cell Chem. Biol.">
        <title>Structural Basis for Inhibitor-Induced Hydrogen Peroxide Production by Kynurenine 3-Monooxygenase.</title>
        <authorList>
            <person name="Kim H.T."/>
            <person name="Na B.K."/>
            <person name="Chung J."/>
            <person name="Kim S."/>
            <person name="Kwon S.K."/>
            <person name="Cha H."/>
            <person name="Son J."/>
            <person name="Cho J.M."/>
            <person name="Hwang K.Y."/>
        </authorList>
    </citation>
    <scope>X-RAY CRYSTALLOGRAPHY (2.10 ANGSTROMS) OF 1-374 IN COMPLEX WITH FAD</scope>
    <scope>FUNCTION</scope>
    <scope>CATALYTIC ACTIVITY</scope>
    <scope>COFACTOR</scope>
    <scope>GLYCOSYLATION AT ASN-465</scope>
    <scope>MUTAGENESIS OF 312-PHE-PHE-313; PHE-312 AND PHE-313</scope>
</reference>
<proteinExistence type="evidence at protein level"/>